<evidence type="ECO:0000250" key="1"/>
<evidence type="ECO:0000250" key="2">
    <source>
        <dbReference type="UniProtKB" id="P04268"/>
    </source>
</evidence>
<evidence type="ECO:0000250" key="3">
    <source>
        <dbReference type="UniProtKB" id="P09493"/>
    </source>
</evidence>
<evidence type="ECO:0000250" key="4">
    <source>
        <dbReference type="UniProtKB" id="P58771"/>
    </source>
</evidence>
<evidence type="ECO:0000256" key="5">
    <source>
        <dbReference type="SAM" id="MobiDB-lite"/>
    </source>
</evidence>
<evidence type="ECO:0000269" key="6">
    <source>
    </source>
</evidence>
<evidence type="ECO:0000269" key="7">
    <source>
    </source>
</evidence>
<evidence type="ECO:0000303" key="8">
    <source>
    </source>
</evidence>
<evidence type="ECO:0000303" key="9">
    <source>
    </source>
</evidence>
<evidence type="ECO:0000303" key="10">
    <source>
    </source>
</evidence>
<evidence type="ECO:0000305" key="11"/>
<evidence type="ECO:0007744" key="12">
    <source>
    </source>
</evidence>
<evidence type="ECO:0007829" key="13">
    <source>
        <dbReference type="PDB" id="1KQL"/>
    </source>
</evidence>
<evidence type="ECO:0007829" key="14">
    <source>
        <dbReference type="PDB" id="2B9C"/>
    </source>
</evidence>
<evidence type="ECO:0007829" key="15">
    <source>
        <dbReference type="PDB" id="2G9J"/>
    </source>
</evidence>
<protein>
    <recommendedName>
        <fullName>Tropomyosin alpha-1 chain</fullName>
    </recommendedName>
    <alternativeName>
        <fullName>Alpha-tropomyosin</fullName>
    </alternativeName>
    <alternativeName>
        <fullName>Tropomyosin-1</fullName>
    </alternativeName>
</protein>
<dbReference type="EMBL" id="M15474">
    <property type="protein sequence ID" value="AAA21801.1"/>
    <property type="molecule type" value="Genomic_DNA"/>
</dbReference>
<dbReference type="EMBL" id="M15472">
    <property type="protein sequence ID" value="AAA21801.1"/>
    <property type="status" value="JOINED"/>
    <property type="molecule type" value="Genomic_DNA"/>
</dbReference>
<dbReference type="EMBL" id="M15473">
    <property type="protein sequence ID" value="AAA21801.1"/>
    <property type="status" value="JOINED"/>
    <property type="molecule type" value="Genomic_DNA"/>
</dbReference>
<dbReference type="EMBL" id="M16432">
    <property type="protein sequence ID" value="AAA21801.1"/>
    <property type="status" value="JOINED"/>
    <property type="molecule type" value="Genomic_DNA"/>
</dbReference>
<dbReference type="EMBL" id="M16433">
    <property type="protein sequence ID" value="AAA21801.1"/>
    <property type="status" value="JOINED"/>
    <property type="molecule type" value="Genomic_DNA"/>
</dbReference>
<dbReference type="EMBL" id="M18135">
    <property type="protein sequence ID" value="AAA21803.1"/>
    <property type="status" value="ALT_TERM"/>
    <property type="molecule type" value="Genomic_DNA"/>
</dbReference>
<dbReference type="EMBL" id="M16432">
    <property type="protein sequence ID" value="AAA21803.1"/>
    <property type="status" value="JOINED"/>
    <property type="molecule type" value="Genomic_DNA"/>
</dbReference>
<dbReference type="EMBL" id="M15472">
    <property type="protein sequence ID" value="AAA21803.1"/>
    <property type="status" value="JOINED"/>
    <property type="molecule type" value="Genomic_DNA"/>
</dbReference>
<dbReference type="EMBL" id="M16433">
    <property type="protein sequence ID" value="AAA21803.1"/>
    <property type="status" value="JOINED"/>
    <property type="molecule type" value="Genomic_DNA"/>
</dbReference>
<dbReference type="EMBL" id="M15473">
    <property type="protein sequence ID" value="AAA21803.1"/>
    <property type="status" value="JOINED"/>
    <property type="molecule type" value="Genomic_DNA"/>
</dbReference>
<dbReference type="EMBL" id="M18135">
    <property type="protein sequence ID" value="AAA21804.1"/>
    <property type="molecule type" value="Genomic_DNA"/>
</dbReference>
<dbReference type="EMBL" id="M16432">
    <property type="protein sequence ID" value="AAA21804.1"/>
    <property type="status" value="JOINED"/>
    <property type="molecule type" value="Genomic_DNA"/>
</dbReference>
<dbReference type="EMBL" id="M16433">
    <property type="protein sequence ID" value="AAA21804.1"/>
    <property type="status" value="JOINED"/>
    <property type="molecule type" value="Genomic_DNA"/>
</dbReference>
<dbReference type="EMBL" id="M18135">
    <property type="protein sequence ID" value="AAA21805.1"/>
    <property type="molecule type" value="Genomic_DNA"/>
</dbReference>
<dbReference type="EMBL" id="M16432">
    <property type="protein sequence ID" value="AAA21805.1"/>
    <property type="status" value="JOINED"/>
    <property type="molecule type" value="Genomic_DNA"/>
</dbReference>
<dbReference type="EMBL" id="M15472">
    <property type="protein sequence ID" value="AAA21805.1"/>
    <property type="status" value="JOINED"/>
    <property type="molecule type" value="Genomic_DNA"/>
</dbReference>
<dbReference type="EMBL" id="M16433">
    <property type="protein sequence ID" value="AAA21805.1"/>
    <property type="status" value="JOINED"/>
    <property type="molecule type" value="Genomic_DNA"/>
</dbReference>
<dbReference type="EMBL" id="X02411">
    <property type="protein sequence ID" value="CAA26258.1"/>
    <property type="status" value="ALT_SEQ"/>
    <property type="molecule type" value="mRNA"/>
</dbReference>
<dbReference type="EMBL" id="M34135">
    <property type="protein sequence ID" value="AAA42252.1"/>
    <property type="molecule type" value="mRNA"/>
</dbReference>
<dbReference type="EMBL" id="M34134">
    <property type="protein sequence ID" value="AAA42253.1"/>
    <property type="molecule type" value="mRNA"/>
</dbReference>
<dbReference type="EMBL" id="M34136">
    <property type="protein sequence ID" value="AAA42254.1"/>
    <property type="molecule type" value="mRNA"/>
</dbReference>
<dbReference type="EMBL" id="M34137">
    <property type="protein sequence ID" value="AAA40773.1"/>
    <property type="molecule type" value="Genomic_DNA"/>
</dbReference>
<dbReference type="EMBL" id="M34138">
    <property type="protein sequence ID" value="AAA40774.1"/>
    <property type="molecule type" value="Genomic_DNA"/>
</dbReference>
<dbReference type="EMBL" id="M60666">
    <property type="protein sequence ID" value="AAA42290.1"/>
    <property type="molecule type" value="mRNA"/>
</dbReference>
<dbReference type="EMBL" id="M60668">
    <property type="protein sequence ID" value="AAA18098.1"/>
    <property type="molecule type" value="mRNA"/>
</dbReference>
<dbReference type="EMBL" id="M60669">
    <property type="protein sequence ID" value="AAA18099.1"/>
    <property type="molecule type" value="mRNA"/>
</dbReference>
<dbReference type="EMBL" id="X02412">
    <property type="protein sequence ID" value="CAA26259.1"/>
    <property type="molecule type" value="mRNA"/>
</dbReference>
<dbReference type="PIR" id="A34787">
    <property type="entry name" value="A34787"/>
</dbReference>
<dbReference type="PIR" id="A39816">
    <property type="entry name" value="A39816"/>
</dbReference>
<dbReference type="PIR" id="B27407">
    <property type="entry name" value="B27407"/>
</dbReference>
<dbReference type="PIR" id="B34787">
    <property type="entry name" value="B34787"/>
</dbReference>
<dbReference type="PIR" id="C34787">
    <property type="entry name" value="C34787"/>
</dbReference>
<dbReference type="PIR" id="C39816">
    <property type="entry name" value="C39816"/>
</dbReference>
<dbReference type="PIR" id="D39816">
    <property type="entry name" value="D39816"/>
</dbReference>
<dbReference type="RefSeq" id="NP_001029241.1">
    <property type="nucleotide sequence ID" value="NM_001034069.1"/>
</dbReference>
<dbReference type="RefSeq" id="NP_001029244.1">
    <molecule id="P04692-3"/>
    <property type="nucleotide sequence ID" value="NM_001034072.1"/>
</dbReference>
<dbReference type="RefSeq" id="NP_001029245.1">
    <property type="nucleotide sequence ID" value="NM_001034073.1"/>
</dbReference>
<dbReference type="RefSeq" id="NP_001029246.1">
    <property type="nucleotide sequence ID" value="NM_001034074.1"/>
</dbReference>
<dbReference type="RefSeq" id="NP_001029247.1">
    <property type="nucleotide sequence ID" value="NM_001034075.1"/>
</dbReference>
<dbReference type="RefSeq" id="NP_001288265.1">
    <molecule id="P04692-1"/>
    <property type="nucleotide sequence ID" value="NM_001301336.1"/>
</dbReference>
<dbReference type="RefSeq" id="NP_001288665.1">
    <molecule id="P04692-5"/>
    <property type="nucleotide sequence ID" value="NM_001301736.1"/>
</dbReference>
<dbReference type="RefSeq" id="NP_062004.1">
    <molecule id="P04692-4"/>
    <property type="nucleotide sequence ID" value="NM_019131.2"/>
</dbReference>
<dbReference type="PDB" id="1IHQ">
    <property type="method" value="NMR"/>
    <property type="chains" value="A/B=206-209"/>
</dbReference>
<dbReference type="PDB" id="1KQL">
    <property type="method" value="X-ray"/>
    <property type="resolution" value="2.70 A"/>
    <property type="chains" value="A/B=254-284"/>
</dbReference>
<dbReference type="PDB" id="1MV4">
    <property type="method" value="NMR"/>
    <property type="chains" value="A/B=251-284"/>
</dbReference>
<dbReference type="PDB" id="1TMZ">
    <property type="method" value="NMR"/>
    <property type="chains" value="A/B=1-14"/>
</dbReference>
<dbReference type="PDB" id="2B9C">
    <property type="method" value="X-ray"/>
    <property type="resolution" value="2.30 A"/>
    <property type="chains" value="A/B=89-208"/>
</dbReference>
<dbReference type="PDB" id="2G9J">
    <property type="method" value="NMR"/>
    <property type="chains" value="A/B=1-14, C/D=251-284"/>
</dbReference>
<dbReference type="PDB" id="3AZD">
    <property type="method" value="X-ray"/>
    <property type="resolution" value="0.98 A"/>
    <property type="chains" value="A/B=206-209"/>
</dbReference>
<dbReference type="PDBsum" id="1IHQ"/>
<dbReference type="PDBsum" id="1KQL"/>
<dbReference type="PDBsum" id="1MV4"/>
<dbReference type="PDBsum" id="1TMZ"/>
<dbReference type="PDBsum" id="2B9C"/>
<dbReference type="PDBsum" id="2G9J"/>
<dbReference type="PDBsum" id="3AZD"/>
<dbReference type="BMRB" id="P04692"/>
<dbReference type="SMR" id="P04692"/>
<dbReference type="BioGRID" id="246968">
    <property type="interactions" value="7"/>
</dbReference>
<dbReference type="DIP" id="DIP-29020N"/>
<dbReference type="FunCoup" id="P04692">
    <property type="interactions" value="1033"/>
</dbReference>
<dbReference type="IntAct" id="P04692">
    <property type="interactions" value="4"/>
</dbReference>
<dbReference type="STRING" id="10116.ENSRNOP00000074187"/>
<dbReference type="GlyGen" id="P04692">
    <property type="glycosylation" value="6 sites, 1 O-linked glycan (6 sites)"/>
</dbReference>
<dbReference type="iPTMnet" id="P04692"/>
<dbReference type="PhosphoSitePlus" id="P04692"/>
<dbReference type="SwissPalm" id="P04692"/>
<dbReference type="jPOST" id="P04692"/>
<dbReference type="PaxDb" id="10116-ENSRNOP00000024493"/>
<dbReference type="Ensembl" id="ENSRNOT00000048044.6">
    <molecule id="P04692-1"/>
    <property type="protein sequence ID" value="ENSRNOP00000048499.3"/>
    <property type="gene ID" value="ENSRNOG00000018184.9"/>
</dbReference>
<dbReference type="GeneID" id="24851"/>
<dbReference type="KEGG" id="rno:24851"/>
<dbReference type="AGR" id="RGD:3898"/>
<dbReference type="CTD" id="7168"/>
<dbReference type="RGD" id="3898">
    <property type="gene designation" value="Tpm1"/>
</dbReference>
<dbReference type="eggNOG" id="KOG1003">
    <property type="taxonomic scope" value="Eukaryota"/>
</dbReference>
<dbReference type="GeneTree" id="ENSGT01030000234542"/>
<dbReference type="HOGENOM" id="CLU_055027_0_0_1"/>
<dbReference type="InParanoid" id="P04692"/>
<dbReference type="PhylomeDB" id="P04692"/>
<dbReference type="TreeFam" id="TF351519"/>
<dbReference type="Reactome" id="R-RNO-390522">
    <property type="pathway name" value="Striated Muscle Contraction"/>
</dbReference>
<dbReference type="Reactome" id="R-RNO-445355">
    <property type="pathway name" value="Smooth Muscle Contraction"/>
</dbReference>
<dbReference type="EvolutionaryTrace" id="P04692"/>
<dbReference type="PRO" id="PR:P04692"/>
<dbReference type="Proteomes" id="UP000002494">
    <property type="component" value="Chromosome 8"/>
</dbReference>
<dbReference type="Bgee" id="ENSRNOG00000018184">
    <property type="expression patterns" value="Expressed in skeletal muscle tissue and 20 other cell types or tissues"/>
</dbReference>
<dbReference type="ExpressionAtlas" id="P04692">
    <property type="expression patterns" value="baseline and differential"/>
</dbReference>
<dbReference type="GO" id="GO:0015629">
    <property type="term" value="C:actin cytoskeleton"/>
    <property type="evidence" value="ECO:0000314"/>
    <property type="project" value="UniProtKB"/>
</dbReference>
<dbReference type="GO" id="GO:0005884">
    <property type="term" value="C:actin filament"/>
    <property type="evidence" value="ECO:0000318"/>
    <property type="project" value="GO_Central"/>
</dbReference>
<dbReference type="GO" id="GO:0032059">
    <property type="term" value="C:bleb"/>
    <property type="evidence" value="ECO:0000266"/>
    <property type="project" value="RGD"/>
</dbReference>
<dbReference type="GO" id="GO:0005737">
    <property type="term" value="C:cytoplasm"/>
    <property type="evidence" value="ECO:0000266"/>
    <property type="project" value="RGD"/>
</dbReference>
<dbReference type="GO" id="GO:0030016">
    <property type="term" value="C:myofibril"/>
    <property type="evidence" value="ECO:0000266"/>
    <property type="project" value="RGD"/>
</dbReference>
<dbReference type="GO" id="GO:0032991">
    <property type="term" value="C:protein-containing complex"/>
    <property type="evidence" value="ECO:0000314"/>
    <property type="project" value="RGD"/>
</dbReference>
<dbReference type="GO" id="GO:0032587">
    <property type="term" value="C:ruffle membrane"/>
    <property type="evidence" value="ECO:0000266"/>
    <property type="project" value="RGD"/>
</dbReference>
<dbReference type="GO" id="GO:0001725">
    <property type="term" value="C:stress fiber"/>
    <property type="evidence" value="ECO:0000266"/>
    <property type="project" value="RGD"/>
</dbReference>
<dbReference type="GO" id="GO:0003779">
    <property type="term" value="F:actin binding"/>
    <property type="evidence" value="ECO:0000314"/>
    <property type="project" value="RGD"/>
</dbReference>
<dbReference type="GO" id="GO:0051015">
    <property type="term" value="F:actin filament binding"/>
    <property type="evidence" value="ECO:0000314"/>
    <property type="project" value="UniProtKB"/>
</dbReference>
<dbReference type="GO" id="GO:0008092">
    <property type="term" value="F:cytoskeletal protein binding"/>
    <property type="evidence" value="ECO:0000266"/>
    <property type="project" value="RGD"/>
</dbReference>
<dbReference type="GO" id="GO:0097718">
    <property type="term" value="F:disordered domain specific binding"/>
    <property type="evidence" value="ECO:0000353"/>
    <property type="project" value="CAFA"/>
</dbReference>
<dbReference type="GO" id="GO:0042802">
    <property type="term" value="F:identical protein binding"/>
    <property type="evidence" value="ECO:0000314"/>
    <property type="project" value="UniProtKB"/>
</dbReference>
<dbReference type="GO" id="GO:0046982">
    <property type="term" value="F:protein heterodimerization activity"/>
    <property type="evidence" value="ECO:0000314"/>
    <property type="project" value="UniProtKB"/>
</dbReference>
<dbReference type="GO" id="GO:0042803">
    <property type="term" value="F:protein homodimerization activity"/>
    <property type="evidence" value="ECO:0000314"/>
    <property type="project" value="UniProtKB"/>
</dbReference>
<dbReference type="GO" id="GO:0051693">
    <property type="term" value="P:actin filament capping"/>
    <property type="evidence" value="ECO:0000314"/>
    <property type="project" value="RGD"/>
</dbReference>
<dbReference type="GO" id="GO:0007015">
    <property type="term" value="P:actin filament organization"/>
    <property type="evidence" value="ECO:0000318"/>
    <property type="project" value="GO_Central"/>
</dbReference>
<dbReference type="GO" id="GO:0060048">
    <property type="term" value="P:cardiac muscle contraction"/>
    <property type="evidence" value="ECO:0000314"/>
    <property type="project" value="RGD"/>
</dbReference>
<dbReference type="GO" id="GO:0034614">
    <property type="term" value="P:cellular response to reactive oxygen species"/>
    <property type="evidence" value="ECO:0000266"/>
    <property type="project" value="RGD"/>
</dbReference>
<dbReference type="GO" id="GO:0001701">
    <property type="term" value="P:in utero embryonic development"/>
    <property type="evidence" value="ECO:0000266"/>
    <property type="project" value="RGD"/>
</dbReference>
<dbReference type="GO" id="GO:0006936">
    <property type="term" value="P:muscle contraction"/>
    <property type="evidence" value="ECO:0000304"/>
    <property type="project" value="RGD"/>
</dbReference>
<dbReference type="GO" id="GO:0030049">
    <property type="term" value="P:muscle filament sliding"/>
    <property type="evidence" value="ECO:0000314"/>
    <property type="project" value="BHF-UCL"/>
</dbReference>
<dbReference type="GO" id="GO:0030336">
    <property type="term" value="P:negative regulation of cell migration"/>
    <property type="evidence" value="ECO:0000316"/>
    <property type="project" value="BHF-UCL"/>
</dbReference>
<dbReference type="GO" id="GO:1904753">
    <property type="term" value="P:negative regulation of vascular associated smooth muscle cell migration"/>
    <property type="evidence" value="ECO:0000266"/>
    <property type="project" value="RGD"/>
</dbReference>
<dbReference type="GO" id="GO:1904706">
    <property type="term" value="P:negative regulation of vascular associated smooth muscle cell proliferation"/>
    <property type="evidence" value="ECO:0000266"/>
    <property type="project" value="RGD"/>
</dbReference>
<dbReference type="GO" id="GO:0045785">
    <property type="term" value="P:positive regulation of cell adhesion"/>
    <property type="evidence" value="ECO:0000316"/>
    <property type="project" value="BHF-UCL"/>
</dbReference>
<dbReference type="GO" id="GO:0003065">
    <property type="term" value="P:positive regulation of heart rate by epinephrine"/>
    <property type="evidence" value="ECO:0000266"/>
    <property type="project" value="RGD"/>
</dbReference>
<dbReference type="GO" id="GO:0051496">
    <property type="term" value="P:positive regulation of stress fiber assembly"/>
    <property type="evidence" value="ECO:0000316"/>
    <property type="project" value="BHF-UCL"/>
</dbReference>
<dbReference type="GO" id="GO:0008360">
    <property type="term" value="P:regulation of cell shape"/>
    <property type="evidence" value="ECO:0000266"/>
    <property type="project" value="RGD"/>
</dbReference>
<dbReference type="GO" id="GO:0031529">
    <property type="term" value="P:ruffle organization"/>
    <property type="evidence" value="ECO:0000316"/>
    <property type="project" value="BHF-UCL"/>
</dbReference>
<dbReference type="GO" id="GO:0045214">
    <property type="term" value="P:sarcomere organization"/>
    <property type="evidence" value="ECO:0000266"/>
    <property type="project" value="RGD"/>
</dbReference>
<dbReference type="GO" id="GO:0055010">
    <property type="term" value="P:ventricular cardiac muscle tissue morphogenesis"/>
    <property type="evidence" value="ECO:0000266"/>
    <property type="project" value="RGD"/>
</dbReference>
<dbReference type="GO" id="GO:0042060">
    <property type="term" value="P:wound healing"/>
    <property type="evidence" value="ECO:0000316"/>
    <property type="project" value="BHF-UCL"/>
</dbReference>
<dbReference type="FunFam" id="1.20.5.1160:FF:000013">
    <property type="entry name" value="Tropomyosin 1 (alpha)"/>
    <property type="match status" value="1"/>
</dbReference>
<dbReference type="FunFam" id="1.20.5.170:FF:000005">
    <property type="entry name" value="Tropomyosin alpha-1 chain"/>
    <property type="match status" value="1"/>
</dbReference>
<dbReference type="FunFam" id="1.20.5.170:FF:000001">
    <property type="entry name" value="Tropomyosin alpha-1 chain isoform 1"/>
    <property type="match status" value="1"/>
</dbReference>
<dbReference type="FunFam" id="1.20.5.340:FF:000001">
    <property type="entry name" value="Tropomyosin alpha-1 chain isoform 2"/>
    <property type="match status" value="1"/>
</dbReference>
<dbReference type="Gene3D" id="1.20.5.170">
    <property type="match status" value="2"/>
</dbReference>
<dbReference type="Gene3D" id="1.20.5.340">
    <property type="match status" value="1"/>
</dbReference>
<dbReference type="InterPro" id="IPR000533">
    <property type="entry name" value="Tropomyosin"/>
</dbReference>
<dbReference type="PANTHER" id="PTHR19269">
    <property type="entry name" value="TROPOMYOSIN"/>
    <property type="match status" value="1"/>
</dbReference>
<dbReference type="Pfam" id="PF00261">
    <property type="entry name" value="Tropomyosin"/>
    <property type="match status" value="1"/>
</dbReference>
<dbReference type="PRINTS" id="PR00194">
    <property type="entry name" value="TROPOMYOSIN"/>
</dbReference>
<dbReference type="SUPFAM" id="SSF57997">
    <property type="entry name" value="Tropomyosin"/>
    <property type="match status" value="1"/>
</dbReference>
<dbReference type="PROSITE" id="PS00326">
    <property type="entry name" value="TROPOMYOSIN"/>
    <property type="match status" value="1"/>
</dbReference>
<proteinExistence type="evidence at protein level"/>
<reference key="1">
    <citation type="journal article" date="1985" name="Nature">
        <title>Comparison of alpha-tropomyosin sequences from smooth and striated muscle.</title>
        <authorList>
            <person name="Ruiz-Opazo N."/>
            <person name="Weinberger J."/>
            <person name="Nadal-Ginard B."/>
        </authorList>
    </citation>
    <scope>NUCLEOTIDE SEQUENCE [MRNA] (ISOFORMS 1 AND 2)</scope>
</reference>
<reference key="2">
    <citation type="journal article" date="1987" name="J. Biol. Chem.">
        <title>Alpha-tropomyosin gene organization. Alternative splicing of duplicated isotype-specific exons accounts for the production of smooth and striated muscle isoforms.</title>
        <authorList>
            <person name="Ruiz-Opazo N."/>
            <person name="Nadal-Ginard B."/>
        </authorList>
    </citation>
    <scope>NUCLEOTIDE SEQUENCE [GENOMIC DNA]</scope>
    <scope>ALTERNATIVE SPLICING</scope>
</reference>
<reference key="3">
    <citation type="journal article" date="1988" name="Mol. Cell. Biol.">
        <title>The rat alpha-tropomyosin gene generates a minimum of six different mRNAs coding for striated, smooth, and nonmuscle isoforms by alternative splicing.</title>
        <authorList>
            <person name="Wieczorek D.F."/>
            <person name="Smith C.W."/>
            <person name="Nadal-Ginard B."/>
        </authorList>
    </citation>
    <scope>NUCLEOTIDE SEQUENCE [GENOMIC DNA]</scope>
    <scope>ALTERNATIVE SPLICING</scope>
</reference>
<reference key="4">
    <citation type="journal article" date="1990" name="Mol. Cell. Biol.">
        <title>Three novel brain tropomyosin isoforms are expressed from the rat alpha-tropomyosin gene through the use of alternative promoters and alternative RNA processing.</title>
        <authorList>
            <person name="Lees-Miller J.P."/>
            <person name="Goodwin L.O."/>
            <person name="Helfman D.M."/>
        </authorList>
    </citation>
    <scope>NUCLEOTIDE SEQUENCE [GENOMIC DNA / MRNA] (ISOFORMS 3; 4 AND 5)</scope>
    <source>
        <tissue>Brain</tissue>
    </source>
</reference>
<reference key="5">
    <citation type="journal article" date="1991" name="J. Biol. Chem.">
        <title>Four fibroblast tropomyosin isoforms are expressed from the rat alpha-tropomyosin gene via alternative RNA splicing and the use of two promoters.</title>
        <authorList>
            <person name="Goodwin L.O."/>
            <person name="Lees-Miller J.P."/>
            <person name="Leonard M.A."/>
            <person name="Cheley S.B."/>
            <person name="Helfman D.M."/>
        </authorList>
    </citation>
    <scope>NUCLEOTIDE SEQUENCE [MRNA] (ISOFORMS 6; 7 AND 8)</scope>
</reference>
<reference key="6">
    <citation type="journal article" date="1982" name="J. Biol. Chem.">
        <title>Cloning and characterization of cDNA sequences corresponding to myosin light chains 1, 2, and 3, troponin-C, troponin-T, alpha-tropomyosin, and alpha-actin.</title>
        <authorList>
            <person name="Garfinkel L.I."/>
            <person name="Periasamy M."/>
            <person name="Nadal-Ginard B."/>
        </authorList>
    </citation>
    <scope>PARTIAL NUCLEOTIDE SEQUENCE [MRNA] (ISOFORM 2)</scope>
</reference>
<reference key="7">
    <citation type="submission" date="2007-09" db="UniProtKB">
        <authorList>
            <person name="Lubec G."/>
            <person name="Afjehi-Sadat L."/>
            <person name="Diao W."/>
            <person name="Kang S.U."/>
            <person name="Lubec S."/>
        </authorList>
    </citation>
    <scope>PROTEIN SEQUENCE OF 92-101; 141-149; 218-226 AND 251-270</scope>
    <scope>PARTIAL PROTEIN SEQUENCE (ISOFORMS 4/5/7/8)</scope>
    <scope>IDENTIFICATION BY MASS SPECTROMETRY</scope>
    <source>
        <strain>Sprague-Dawley</strain>
        <tissue>Brain</tissue>
        <tissue>Hippocampus</tissue>
        <tissue>Spinal cord</tissue>
    </source>
</reference>
<reference key="8">
    <citation type="journal article" date="1995" name="Proc. Natl. Acad. Sci. U.S.A.">
        <title>Specificity of dimer formation in tropomyosins: influence of alternatively spliced exons on homodimer and heterodimer assembly.</title>
        <authorList>
            <person name="Gimona M."/>
            <person name="Watakabe A."/>
            <person name="Helfman D.M."/>
        </authorList>
    </citation>
    <scope>FUNCTION</scope>
    <scope>SUBUNIT</scope>
    <scope>SUBCELLULAR LOCATION</scope>
</reference>
<reference key="9">
    <citation type="journal article" date="2012" name="Biochemistry">
        <title>In vitro formation and characterization of the skeletal muscle alpha.beta tropomyosin heterodimers.</title>
        <authorList>
            <person name="Kalyva A."/>
            <person name="Schmidtmann A."/>
            <person name="Geeves M.A."/>
        </authorList>
    </citation>
    <scope>FUNCTION</scope>
    <scope>SUBUNIT</scope>
</reference>
<reference key="10">
    <citation type="journal article" date="2012" name="Nat. Commun.">
        <title>Quantitative maps of protein phosphorylation sites across 14 different rat organs and tissues.</title>
        <authorList>
            <person name="Lundby A."/>
            <person name="Secher A."/>
            <person name="Lage K."/>
            <person name="Nordsborg N.B."/>
            <person name="Dmytriyev A."/>
            <person name="Lundby C."/>
            <person name="Olsen J.V."/>
        </authorList>
    </citation>
    <scope>PHOSPHORYLATION [LARGE SCALE ANALYSIS] AT SER-45; SER-174; SER-252 AND TYR-261</scope>
    <scope>IDENTIFICATION BY MASS SPECTROMETRY [LARGE SCALE ANALYSIS]</scope>
</reference>
<name>TPM1_RAT</name>
<organism>
    <name type="scientific">Rattus norvegicus</name>
    <name type="common">Rat</name>
    <dbReference type="NCBI Taxonomy" id="10116"/>
    <lineage>
        <taxon>Eukaryota</taxon>
        <taxon>Metazoa</taxon>
        <taxon>Chordata</taxon>
        <taxon>Craniata</taxon>
        <taxon>Vertebrata</taxon>
        <taxon>Euteleostomi</taxon>
        <taxon>Mammalia</taxon>
        <taxon>Eutheria</taxon>
        <taxon>Euarchontoglires</taxon>
        <taxon>Glires</taxon>
        <taxon>Rodentia</taxon>
        <taxon>Myomorpha</taxon>
        <taxon>Muroidea</taxon>
        <taxon>Muridae</taxon>
        <taxon>Murinae</taxon>
        <taxon>Rattus</taxon>
    </lineage>
</organism>
<keyword id="KW-0002">3D-structure</keyword>
<keyword id="KW-0007">Acetylation</keyword>
<keyword id="KW-0009">Actin-binding</keyword>
<keyword id="KW-0025">Alternative splicing</keyword>
<keyword id="KW-0175">Coiled coil</keyword>
<keyword id="KW-0963">Cytoplasm</keyword>
<keyword id="KW-0206">Cytoskeleton</keyword>
<keyword id="KW-0903">Direct protein sequencing</keyword>
<keyword id="KW-0514">Muscle protein</keyword>
<keyword id="KW-0597">Phosphoprotein</keyword>
<keyword id="KW-1185">Reference proteome</keyword>
<gene>
    <name type="primary">Tpm1</name>
    <name type="synonym">Alpha-tm</name>
    <name type="synonym">Tpma</name>
</gene>
<feature type="chain" id="PRO_0000205624" description="Tropomyosin alpha-1 chain">
    <location>
        <begin position="1"/>
        <end position="284"/>
    </location>
</feature>
<feature type="region of interest" description="Disordered" evidence="5">
    <location>
        <begin position="1"/>
        <end position="38"/>
    </location>
</feature>
<feature type="region of interest" description="Disordered" evidence="5">
    <location>
        <begin position="116"/>
        <end position="136"/>
    </location>
</feature>
<feature type="coiled-coil region">
    <location>
        <begin position="1"/>
        <end position="284"/>
    </location>
</feature>
<feature type="compositionally biased region" description="Basic and acidic residues" evidence="5">
    <location>
        <begin position="12"/>
        <end position="38"/>
    </location>
</feature>
<feature type="modified residue" description="N-acetylmethionine" evidence="3">
    <location>
        <position position="1"/>
    </location>
</feature>
<feature type="modified residue" description="Phosphoserine" evidence="12">
    <location>
        <position position="45"/>
    </location>
</feature>
<feature type="modified residue" description="Phosphoserine" evidence="12">
    <location>
        <position position="174"/>
    </location>
</feature>
<feature type="modified residue" description="Phosphoserine" evidence="4">
    <location>
        <position position="186"/>
    </location>
</feature>
<feature type="modified residue" description="Phosphoserine" evidence="4">
    <location>
        <position position="206"/>
    </location>
</feature>
<feature type="modified residue" description="Phosphoserine" evidence="12">
    <location>
        <position position="252"/>
    </location>
</feature>
<feature type="modified residue" description="Phosphotyrosine" evidence="12">
    <location>
        <position position="261"/>
    </location>
</feature>
<feature type="modified residue" description="Phosphoserine" evidence="4">
    <location>
        <position position="271"/>
    </location>
</feature>
<feature type="modified residue" description="Phosphoserine; by DAPK1" evidence="3">
    <location>
        <position position="283"/>
    </location>
</feature>
<feature type="splice variant" id="VSP_006581" description="In isoform 4, isoform 5, isoform 7 and isoform 8." evidence="8 9">
    <original>MDAIKKKMQMLKLDKENALDRAEQAEADKKAAEDRSKQLEDELVSLQKKLKGTEDELDKYSEALKDAQEKLELAEKKATD</original>
    <variation>MAGSSSLEAVRRKIRSLQEQADAAEERAGSLQRELDQERKLRET</variation>
    <location>
        <begin position="1"/>
        <end position="80"/>
    </location>
</feature>
<feature type="splice variant" id="VSP_006582" description="In isoform 2." evidence="10">
    <original>DELVSLQKKLKGTEDELDKYSEALKDAQEKLELAEKKATD</original>
    <variation>EDISAKEKLLRASEDERDRVLEELHKAEDSLLAADETAAK</variation>
    <location>
        <begin position="41"/>
        <end position="80"/>
    </location>
</feature>
<feature type="splice variant" id="VSP_006583" description="In isoform 8." evidence="8">
    <original>KCAELEEELKTVTNNLKSLEAQAE</original>
    <variation>QVRQLEEQLRIMDQTLKALMAAED</variation>
    <location>
        <begin position="189"/>
        <end position="212"/>
    </location>
</feature>
<feature type="splice variant" id="VSP_006584" description="In isoform 2, isoform 6, isoform 7 and isoform 8." evidence="8 10">
    <original>DELYAQKLKYKAISEELDHALNDMTSI</original>
    <variation>EKVAHAKEENLSMHQMLHQTLLELNNM</variation>
    <location>
        <begin position="258"/>
        <end position="284"/>
    </location>
</feature>
<feature type="splice variant" id="VSP_006585" description="In isoform 3 and isoform 5." evidence="9">
    <original>ELYAQKLKYKAISEELDHALNDMTSI</original>
    <variation>QLYHQLEQNRRLTNELKLALNED</variation>
    <location>
        <begin position="259"/>
        <end position="284"/>
    </location>
</feature>
<feature type="splice variant" id="VSP_006586" description="In isoform 4." evidence="9">
    <original>ELYAQKLKYKAISEELDHALNDMTSI</original>
    <variation>KFLCFSPPKTPSSSRMSHLSELCICLLSS</variation>
    <location>
        <begin position="259"/>
        <end position="284"/>
    </location>
</feature>
<feature type="sequence conflict" description="In Ref. 4; AAA42252." evidence="11" ref="4">
    <original>G</original>
    <variation>A</variation>
    <location>
        <position position="52"/>
    </location>
</feature>
<feature type="sequence conflict" description="In Ref. 2; AAA21801 and 3; AAA21805." evidence="11" ref="2 3">
    <original>N</original>
    <variation>K</variation>
    <location>
        <position position="279"/>
    </location>
</feature>
<feature type="helix" evidence="15">
    <location>
        <begin position="2"/>
        <end position="14"/>
    </location>
</feature>
<feature type="turn" evidence="14">
    <location>
        <begin position="95"/>
        <end position="97"/>
    </location>
</feature>
<feature type="helix" evidence="14">
    <location>
        <begin position="100"/>
        <end position="103"/>
    </location>
</feature>
<feature type="turn" evidence="14">
    <location>
        <begin position="104"/>
        <end position="107"/>
    </location>
</feature>
<feature type="helix" evidence="14">
    <location>
        <begin position="108"/>
        <end position="123"/>
    </location>
</feature>
<feature type="helix" evidence="14">
    <location>
        <begin position="125"/>
        <end position="208"/>
    </location>
</feature>
<feature type="helix" evidence="13">
    <location>
        <begin position="254"/>
        <end position="282"/>
    </location>
</feature>
<feature type="sequence conflict" description="In Ref. 1; CAA26258." evidence="11" ref="1">
    <original>V</original>
    <variation>G</variation>
    <location sequence="P04692-2">
        <position position="260"/>
    </location>
</feature>
<feature type="sequence conflict" description="In Ref. 1; CAA26258." evidence="11" ref="1">
    <original>H</original>
    <variation>D</variation>
    <location sequence="P04692-2">
        <position position="275"/>
    </location>
</feature>
<feature type="sequence conflict" description="In Ref. 5; AAA42290." evidence="11" ref="5">
    <original>H</original>
    <variation>D</variation>
    <location sequence="P04692-6">
        <position position="275"/>
    </location>
</feature>
<feature type="sequence conflict" description="In Ref. 5; AAA18098." evidence="11" ref="5">
    <original>H</original>
    <variation>D</variation>
    <location sequence="P04692-7">
        <position position="239"/>
    </location>
</feature>
<feature type="sequence conflict" description="In Ref. 5; AAA18099." evidence="11" ref="5">
    <original>H</original>
    <variation>D</variation>
    <location sequence="P04692-8">
        <position position="239"/>
    </location>
</feature>
<sequence length="284" mass="32681">MDAIKKKMQMLKLDKENALDRAEQAEADKKAAEDRSKQLEDELVSLQKKLKGTEDELDKYSEALKDAQEKLELAEKKATDAEADVASLNRRIQLVEEELDRAQERLATALQKLEEAEKAADESERGMKVIESRAQKDEEKMEIQEIQLKEAKHIAEDADRKYEEVARKLVIIESDLERAEERAELSEGKCAELEEELKTVTNNLKSLEAQAEKYSQKEDKYEEEIKVLSDKLKEAETRAEFAERSVTKLEKSIDDLEDELYAQKLKYKAISEELDHALNDMTSI</sequence>
<comment type="function">
    <text evidence="6 7">Binds to actin filaments in muscle and non-muscle cells (PubMed:22812662, PubMed:7568216). Plays a central role, in association with the troponin complex, in the calcium dependent regulation of vertebrate striated muscle contraction (PubMed:22812662). Smooth muscle contraction is regulated by interaction with caldesmon. In non-muscle cells is implicated in stabilizing cytoskeleton actin filaments.</text>
</comment>
<comment type="subunit">
    <text evidence="2 3 6 7">Homodimer (PubMed:22812662, PubMed:7568216). Heterodimer of an alpha (TPM1, TPM3 or TPM4) and a beta (TPM2) chain (PubMed:22812662, PubMed:7568216). Interacts with HRG (via the HRR domain); the interaction contributes to the antiangiogenic properties of the histidine/proline-rich region (HRR) of HRG (By similarity). Interacts (via N-terminus) with LMOD2 (via N-terminus) and TMOD1 (via N-terminus) (By similarity).</text>
</comment>
<comment type="subcellular location">
    <subcellularLocation>
        <location evidence="7">Cytoplasm</location>
        <location evidence="7">Cytoskeleton</location>
    </subcellularLocation>
    <text evidence="7">Associates with F-actin stress fibers (PubMed:7568216).</text>
</comment>
<comment type="alternative products">
    <event type="alternative splicing"/>
    <isoform>
        <id>P04692-1</id>
        <name>1</name>
        <name>Skeletal muscle</name>
        <sequence type="displayed"/>
    </isoform>
    <isoform>
        <id>P04692-2</id>
        <name>2</name>
        <name>Smooth muscle</name>
        <sequence type="described" ref="VSP_006582 VSP_006584"/>
    </isoform>
    <isoform>
        <id>P04692-3</id>
        <name>3</name>
        <name>Brain TMBr-1</name>
        <sequence type="described" ref="VSP_006585"/>
    </isoform>
    <isoform>
        <id>P04692-4</id>
        <name>4</name>
        <name>Brain TMBr-2</name>
        <sequence type="described" ref="VSP_006581 VSP_006586"/>
    </isoform>
    <isoform>
        <id>P04692-5</id>
        <name>5</name>
        <name>Brain TMBr-3</name>
        <sequence type="described" ref="VSP_006581 VSP_006585"/>
    </isoform>
    <isoform>
        <id>P04692-6</id>
        <name>6</name>
        <name>Fibroblast TM-2</name>
        <sequence type="described" ref="VSP_006584"/>
    </isoform>
    <isoform>
        <id>P04692-7</id>
        <name>7</name>
        <name>Fibroblast 5a</name>
        <sequence type="described" ref="VSP_006581 VSP_006584"/>
    </isoform>
    <isoform>
        <id>P04692-8</id>
        <name>8</name>
        <name>Fibroblast 5b</name>
        <sequence type="described" ref="VSP_006581 VSP_006583 VSP_006584"/>
    </isoform>
    <text>Additional isoforms seem to exist.</text>
</comment>
<comment type="domain">
    <text>The molecule is in a coiled coil structure that is formed by 2 polypeptide chains. The sequence exhibits a prominent seven-residues periodicity.</text>
</comment>
<comment type="PTM">
    <text evidence="1">Phosphorylated at Ser-283 by DAPK1 in response to oxidative stress and this phosphorylation enhances stress fiber formation in endothelial cells.</text>
</comment>
<comment type="similarity">
    <text evidence="11">Belongs to the tropomyosin family.</text>
</comment>
<comment type="sequence caution" evidence="11">
    <molecule>Isoform 2</molecule>
    <conflict type="miscellaneous discrepancy">
        <sequence resource="EMBL-CDS" id="CAA26258"/>
    </conflict>
    <text>miscellaneous discrepancy.</text>
</comment>
<accession>P04692</accession>
<accession>P06469</accession>
<accession>P18342</accession>
<accession>P18343</accession>
<accession>P18344</accession>
<accession>P19354</accession>
<accession>Q53X09</accession>
<accession>Q63582</accession>
<accession>Q63608</accession>
<accession>Q63609</accession>